<dbReference type="EC" id="2.7.4.9" evidence="1"/>
<dbReference type="EMBL" id="CP000111">
    <property type="protein sequence ID" value="ABB49194.1"/>
    <property type="molecule type" value="Genomic_DNA"/>
</dbReference>
<dbReference type="RefSeq" id="WP_011375698.1">
    <property type="nucleotide sequence ID" value="NC_007577.1"/>
</dbReference>
<dbReference type="SMR" id="Q31D51"/>
<dbReference type="STRING" id="74546.PMT9312_0132"/>
<dbReference type="KEGG" id="pmi:PMT9312_0132"/>
<dbReference type="eggNOG" id="COG0125">
    <property type="taxonomic scope" value="Bacteria"/>
</dbReference>
<dbReference type="HOGENOM" id="CLU_049131_0_2_3"/>
<dbReference type="OrthoDB" id="9774907at2"/>
<dbReference type="Proteomes" id="UP000002715">
    <property type="component" value="Chromosome"/>
</dbReference>
<dbReference type="GO" id="GO:0005829">
    <property type="term" value="C:cytosol"/>
    <property type="evidence" value="ECO:0007669"/>
    <property type="project" value="TreeGrafter"/>
</dbReference>
<dbReference type="GO" id="GO:0005524">
    <property type="term" value="F:ATP binding"/>
    <property type="evidence" value="ECO:0007669"/>
    <property type="project" value="UniProtKB-UniRule"/>
</dbReference>
<dbReference type="GO" id="GO:0004798">
    <property type="term" value="F:dTMP kinase activity"/>
    <property type="evidence" value="ECO:0007669"/>
    <property type="project" value="UniProtKB-UniRule"/>
</dbReference>
<dbReference type="GO" id="GO:0006233">
    <property type="term" value="P:dTDP biosynthetic process"/>
    <property type="evidence" value="ECO:0007669"/>
    <property type="project" value="InterPro"/>
</dbReference>
<dbReference type="GO" id="GO:0006235">
    <property type="term" value="P:dTTP biosynthetic process"/>
    <property type="evidence" value="ECO:0007669"/>
    <property type="project" value="UniProtKB-UniRule"/>
</dbReference>
<dbReference type="GO" id="GO:0006227">
    <property type="term" value="P:dUDP biosynthetic process"/>
    <property type="evidence" value="ECO:0007669"/>
    <property type="project" value="TreeGrafter"/>
</dbReference>
<dbReference type="CDD" id="cd01672">
    <property type="entry name" value="TMPK"/>
    <property type="match status" value="1"/>
</dbReference>
<dbReference type="FunFam" id="3.40.50.300:FF:000225">
    <property type="entry name" value="Thymidylate kinase"/>
    <property type="match status" value="1"/>
</dbReference>
<dbReference type="Gene3D" id="3.40.50.300">
    <property type="entry name" value="P-loop containing nucleotide triphosphate hydrolases"/>
    <property type="match status" value="1"/>
</dbReference>
<dbReference type="HAMAP" id="MF_00165">
    <property type="entry name" value="Thymidylate_kinase"/>
    <property type="match status" value="1"/>
</dbReference>
<dbReference type="InterPro" id="IPR027417">
    <property type="entry name" value="P-loop_NTPase"/>
</dbReference>
<dbReference type="InterPro" id="IPR039430">
    <property type="entry name" value="Thymidylate_kin-like_dom"/>
</dbReference>
<dbReference type="InterPro" id="IPR018095">
    <property type="entry name" value="Thymidylate_kin_CS"/>
</dbReference>
<dbReference type="InterPro" id="IPR018094">
    <property type="entry name" value="Thymidylate_kinase"/>
</dbReference>
<dbReference type="NCBIfam" id="TIGR00041">
    <property type="entry name" value="DTMP_kinase"/>
    <property type="match status" value="1"/>
</dbReference>
<dbReference type="PANTHER" id="PTHR10344">
    <property type="entry name" value="THYMIDYLATE KINASE"/>
    <property type="match status" value="1"/>
</dbReference>
<dbReference type="PANTHER" id="PTHR10344:SF4">
    <property type="entry name" value="UMP-CMP KINASE 2, MITOCHONDRIAL"/>
    <property type="match status" value="1"/>
</dbReference>
<dbReference type="Pfam" id="PF02223">
    <property type="entry name" value="Thymidylate_kin"/>
    <property type="match status" value="1"/>
</dbReference>
<dbReference type="SUPFAM" id="SSF52540">
    <property type="entry name" value="P-loop containing nucleoside triphosphate hydrolases"/>
    <property type="match status" value="1"/>
</dbReference>
<dbReference type="PROSITE" id="PS01331">
    <property type="entry name" value="THYMIDYLATE_KINASE"/>
    <property type="match status" value="1"/>
</dbReference>
<keyword id="KW-0067">ATP-binding</keyword>
<keyword id="KW-0418">Kinase</keyword>
<keyword id="KW-0545">Nucleotide biosynthesis</keyword>
<keyword id="KW-0547">Nucleotide-binding</keyword>
<keyword id="KW-0808">Transferase</keyword>
<sequence>MKGKFIVIEGIDGCGKTTQINELSKWLPKSGLIKKGSKLITTREPGGSLLGKKLRGLILDNNKTNKPSSLAELLLYSADRAEHISKIISPALNNNDWVISDRFSDSTLAYQGYGRKINLEIIKKVESIVCQGEYPDLTFFLEISPEESIMRRKNEIPDRIESEGIRFLEKVNEGFKLIAREKKWKVISASQNIKTISNQIKETLLNNFSNDK</sequence>
<feature type="chain" id="PRO_1000023249" description="Thymidylate kinase">
    <location>
        <begin position="1"/>
        <end position="212"/>
    </location>
</feature>
<feature type="binding site" evidence="1">
    <location>
        <begin position="10"/>
        <end position="17"/>
    </location>
    <ligand>
        <name>ATP</name>
        <dbReference type="ChEBI" id="CHEBI:30616"/>
    </ligand>
</feature>
<proteinExistence type="inferred from homology"/>
<evidence type="ECO:0000255" key="1">
    <source>
        <dbReference type="HAMAP-Rule" id="MF_00165"/>
    </source>
</evidence>
<comment type="function">
    <text evidence="1">Phosphorylation of dTMP to form dTDP in both de novo and salvage pathways of dTTP synthesis.</text>
</comment>
<comment type="catalytic activity">
    <reaction evidence="1">
        <text>dTMP + ATP = dTDP + ADP</text>
        <dbReference type="Rhea" id="RHEA:13517"/>
        <dbReference type="ChEBI" id="CHEBI:30616"/>
        <dbReference type="ChEBI" id="CHEBI:58369"/>
        <dbReference type="ChEBI" id="CHEBI:63528"/>
        <dbReference type="ChEBI" id="CHEBI:456216"/>
        <dbReference type="EC" id="2.7.4.9"/>
    </reaction>
</comment>
<comment type="similarity">
    <text evidence="1">Belongs to the thymidylate kinase family.</text>
</comment>
<name>KTHY_PROM9</name>
<reference key="1">
    <citation type="journal article" date="2006" name="Science">
        <title>Genomic islands and the ecology and evolution of Prochlorococcus.</title>
        <authorList>
            <person name="Coleman M.L."/>
            <person name="Sullivan M.B."/>
            <person name="Martiny A.C."/>
            <person name="Steglich C."/>
            <person name="Barry K."/>
            <person name="Delong E.F."/>
            <person name="Chisholm S.W."/>
        </authorList>
    </citation>
    <scope>NUCLEOTIDE SEQUENCE [LARGE SCALE GENOMIC DNA]</scope>
    <source>
        <strain>MIT 9312</strain>
    </source>
</reference>
<accession>Q31D51</accession>
<gene>
    <name evidence="1" type="primary">tmk</name>
    <name type="ordered locus">PMT9312_0132</name>
</gene>
<protein>
    <recommendedName>
        <fullName evidence="1">Thymidylate kinase</fullName>
        <ecNumber evidence="1">2.7.4.9</ecNumber>
    </recommendedName>
    <alternativeName>
        <fullName evidence="1">dTMP kinase</fullName>
    </alternativeName>
</protein>
<organism>
    <name type="scientific">Prochlorococcus marinus (strain MIT 9312)</name>
    <dbReference type="NCBI Taxonomy" id="74546"/>
    <lineage>
        <taxon>Bacteria</taxon>
        <taxon>Bacillati</taxon>
        <taxon>Cyanobacteriota</taxon>
        <taxon>Cyanophyceae</taxon>
        <taxon>Synechococcales</taxon>
        <taxon>Prochlorococcaceae</taxon>
        <taxon>Prochlorococcus</taxon>
    </lineage>
</organism>